<name>PYRC_PYRHO</name>
<feature type="chain" id="PRO_0000147277" description="Dihydroorotase">
    <location>
        <begin position="1"/>
        <end position="417"/>
    </location>
</feature>
<feature type="active site" evidence="1">
    <location>
        <position position="275"/>
    </location>
</feature>
<feature type="binding site" evidence="1">
    <location>
        <position position="60"/>
    </location>
    <ligand>
        <name>Zn(2+)</name>
        <dbReference type="ChEBI" id="CHEBI:29105"/>
        <label>1</label>
    </ligand>
</feature>
<feature type="binding site" evidence="1">
    <location>
        <begin position="62"/>
        <end position="64"/>
    </location>
    <ligand>
        <name>substrate</name>
    </ligand>
</feature>
<feature type="binding site" evidence="1">
    <location>
        <position position="62"/>
    </location>
    <ligand>
        <name>Zn(2+)</name>
        <dbReference type="ChEBI" id="CHEBI:29105"/>
        <label>1</label>
    </ligand>
</feature>
<feature type="binding site" evidence="1">
    <location>
        <position position="94"/>
    </location>
    <ligand>
        <name>substrate</name>
    </ligand>
</feature>
<feature type="binding site" evidence="1">
    <location>
        <position position="138"/>
    </location>
    <ligand>
        <name>Zn(2+)</name>
        <dbReference type="ChEBI" id="CHEBI:29105"/>
        <label>1</label>
    </ligand>
</feature>
<feature type="binding site" evidence="1">
    <location>
        <position position="138"/>
    </location>
    <ligand>
        <name>Zn(2+)</name>
        <dbReference type="ChEBI" id="CHEBI:29105"/>
        <label>2</label>
    </ligand>
</feature>
<feature type="binding site" evidence="1">
    <location>
        <position position="167"/>
    </location>
    <ligand>
        <name>Zn(2+)</name>
        <dbReference type="ChEBI" id="CHEBI:29105"/>
        <label>2</label>
    </ligand>
</feature>
<feature type="binding site" evidence="1">
    <location>
        <position position="207"/>
    </location>
    <ligand>
        <name>Zn(2+)</name>
        <dbReference type="ChEBI" id="CHEBI:29105"/>
        <label>2</label>
    </ligand>
</feature>
<feature type="binding site" evidence="1">
    <location>
        <position position="275"/>
    </location>
    <ligand>
        <name>Zn(2+)</name>
        <dbReference type="ChEBI" id="CHEBI:29105"/>
        <label>1</label>
    </ligand>
</feature>
<feature type="binding site" evidence="1">
    <location>
        <position position="279"/>
    </location>
    <ligand>
        <name>substrate</name>
    </ligand>
</feature>
<feature type="binding site" evidence="1">
    <location>
        <begin position="289"/>
        <end position="290"/>
    </location>
    <ligand>
        <name>substrate</name>
    </ligand>
</feature>
<feature type="modified residue" description="N6-carboxylysine" evidence="1">
    <location>
        <position position="138"/>
    </location>
</feature>
<evidence type="ECO:0000255" key="1">
    <source>
        <dbReference type="HAMAP-Rule" id="MF_00220"/>
    </source>
</evidence>
<keyword id="KW-0378">Hydrolase</keyword>
<keyword id="KW-0479">Metal-binding</keyword>
<keyword id="KW-0665">Pyrimidine biosynthesis</keyword>
<keyword id="KW-0862">Zinc</keyword>
<gene>
    <name evidence="1" type="primary">pyrC</name>
    <name type="ordered locus">PH1963</name>
    <name type="ORF">PHBD037</name>
</gene>
<comment type="function">
    <text evidence="1">Catalyzes the reversible cyclization of carbamoyl aspartate to dihydroorotate.</text>
</comment>
<comment type="catalytic activity">
    <reaction evidence="1">
        <text>(S)-dihydroorotate + H2O = N-carbamoyl-L-aspartate + H(+)</text>
        <dbReference type="Rhea" id="RHEA:24296"/>
        <dbReference type="ChEBI" id="CHEBI:15377"/>
        <dbReference type="ChEBI" id="CHEBI:15378"/>
        <dbReference type="ChEBI" id="CHEBI:30864"/>
        <dbReference type="ChEBI" id="CHEBI:32814"/>
        <dbReference type="EC" id="3.5.2.3"/>
    </reaction>
</comment>
<comment type="cofactor">
    <cofactor evidence="1">
        <name>Zn(2+)</name>
        <dbReference type="ChEBI" id="CHEBI:29105"/>
    </cofactor>
    <text evidence="1">Binds 2 Zn(2+) ions per subunit.</text>
</comment>
<comment type="pathway">
    <text evidence="1">Pyrimidine metabolism; UMP biosynthesis via de novo pathway; (S)-dihydroorotate from bicarbonate: step 3/3.</text>
</comment>
<comment type="similarity">
    <text evidence="1">Belongs to the metallo-dependent hydrolases superfamily. DHOase family. Class I DHOase subfamily.</text>
</comment>
<organism>
    <name type="scientific">Pyrococcus horikoshii (strain ATCC 700860 / DSM 12428 / JCM 9974 / NBRC 100139 / OT-3)</name>
    <dbReference type="NCBI Taxonomy" id="70601"/>
    <lineage>
        <taxon>Archaea</taxon>
        <taxon>Methanobacteriati</taxon>
        <taxon>Methanobacteriota</taxon>
        <taxon>Thermococci</taxon>
        <taxon>Thermococcales</taxon>
        <taxon>Thermococcaceae</taxon>
        <taxon>Pyrococcus</taxon>
    </lineage>
</organism>
<accession>O57740</accession>
<protein>
    <recommendedName>
        <fullName evidence="1">Dihydroorotase</fullName>
        <shortName evidence="1">DHOase</shortName>
        <ecNumber evidence="1">3.5.2.3</ecNumber>
    </recommendedName>
</protein>
<sequence length="417" mass="47226">MTQVDLVVVGKFLFKEKIIDGSIGIEDDKIAKFSLRELKGDKKIKVEKGKIILPGLIDVHVHLRDFNESYKETIASGTKAAIHGGITTVFDMPNTKPPIMDEKTLKLRELIFKKKSYSDYALGFLIAGNEPAKADFYKIFMGASTGGIYSKNFEEDYKKAPDIVSVHAEEYELINRYPERPPIVEVVAIKKALQASKKMKKPLHICHVSTKDGLKEILKANIPWVSFEVTPHHLFLTRRDYERSKLLKVYPPLRDEEDRRYLWENLKSIPIIASDHAPHTLEDKEAGAAGLPGLETEVALLLDAVNKGMITIWDIVAKMSINPARIFKIKNKGWEEGKDADLIVVDMKKEWTIKAENFYTKANWTPYEGWKVKGKVIMTILRGEVVMEDDEIIGKPRGERIVKEGNAQGNLGSSQEH</sequence>
<reference key="1">
    <citation type="journal article" date="1998" name="DNA Res.">
        <title>Complete sequence and gene organization of the genome of a hyper-thermophilic archaebacterium, Pyrococcus horikoshii OT3.</title>
        <authorList>
            <person name="Kawarabayasi Y."/>
            <person name="Sawada M."/>
            <person name="Horikawa H."/>
            <person name="Haikawa Y."/>
            <person name="Hino Y."/>
            <person name="Yamamoto S."/>
            <person name="Sekine M."/>
            <person name="Baba S."/>
            <person name="Kosugi H."/>
            <person name="Hosoyama A."/>
            <person name="Nagai Y."/>
            <person name="Sakai M."/>
            <person name="Ogura K."/>
            <person name="Otsuka R."/>
            <person name="Nakazawa H."/>
            <person name="Takamiya M."/>
            <person name="Ohfuku Y."/>
            <person name="Funahashi T."/>
            <person name="Tanaka T."/>
            <person name="Kudoh Y."/>
            <person name="Yamazaki J."/>
            <person name="Kushida N."/>
            <person name="Oguchi A."/>
            <person name="Aoki K."/>
            <person name="Yoshizawa T."/>
            <person name="Nakamura Y."/>
            <person name="Robb F.T."/>
            <person name="Horikoshi K."/>
            <person name="Masuchi Y."/>
            <person name="Shizuya H."/>
            <person name="Kikuchi H."/>
        </authorList>
    </citation>
    <scope>NUCLEOTIDE SEQUENCE [LARGE SCALE GENOMIC DNA]</scope>
    <source>
        <strain>ATCC 700860 / DSM 12428 / JCM 9974 / NBRC 100139 / OT-3</strain>
    </source>
</reference>
<dbReference type="EC" id="3.5.2.3" evidence="1"/>
<dbReference type="EMBL" id="BA000001">
    <property type="protein sequence ID" value="BAA31090.1"/>
    <property type="molecule type" value="Genomic_DNA"/>
</dbReference>
<dbReference type="PIR" id="C71212">
    <property type="entry name" value="C71212"/>
</dbReference>
<dbReference type="RefSeq" id="WP_010886029.1">
    <property type="nucleotide sequence ID" value="NC_000961.1"/>
</dbReference>
<dbReference type="SMR" id="O57740"/>
<dbReference type="STRING" id="70601.gene:9378976"/>
<dbReference type="EnsemblBacteria" id="BAA31090">
    <property type="protein sequence ID" value="BAA31090"/>
    <property type="gene ID" value="BAA31090"/>
</dbReference>
<dbReference type="GeneID" id="1442811"/>
<dbReference type="KEGG" id="pho:PH1963"/>
<dbReference type="eggNOG" id="arCOG00689">
    <property type="taxonomic scope" value="Archaea"/>
</dbReference>
<dbReference type="UniPathway" id="UPA00070">
    <property type="reaction ID" value="UER00117"/>
</dbReference>
<dbReference type="Proteomes" id="UP000000752">
    <property type="component" value="Chromosome"/>
</dbReference>
<dbReference type="GO" id="GO:0005737">
    <property type="term" value="C:cytoplasm"/>
    <property type="evidence" value="ECO:0007669"/>
    <property type="project" value="TreeGrafter"/>
</dbReference>
<dbReference type="GO" id="GO:0004038">
    <property type="term" value="F:allantoinase activity"/>
    <property type="evidence" value="ECO:0007669"/>
    <property type="project" value="TreeGrafter"/>
</dbReference>
<dbReference type="GO" id="GO:0004151">
    <property type="term" value="F:dihydroorotase activity"/>
    <property type="evidence" value="ECO:0007669"/>
    <property type="project" value="UniProtKB-UniRule"/>
</dbReference>
<dbReference type="GO" id="GO:0008270">
    <property type="term" value="F:zinc ion binding"/>
    <property type="evidence" value="ECO:0007669"/>
    <property type="project" value="UniProtKB-UniRule"/>
</dbReference>
<dbReference type="GO" id="GO:0044205">
    <property type="term" value="P:'de novo' UMP biosynthetic process"/>
    <property type="evidence" value="ECO:0007669"/>
    <property type="project" value="UniProtKB-UniRule"/>
</dbReference>
<dbReference type="GO" id="GO:0006145">
    <property type="term" value="P:purine nucleobase catabolic process"/>
    <property type="evidence" value="ECO:0007669"/>
    <property type="project" value="TreeGrafter"/>
</dbReference>
<dbReference type="CDD" id="cd01318">
    <property type="entry name" value="DHOase_IIb"/>
    <property type="match status" value="1"/>
</dbReference>
<dbReference type="Gene3D" id="3.20.20.140">
    <property type="entry name" value="Metal-dependent hydrolases"/>
    <property type="match status" value="1"/>
</dbReference>
<dbReference type="HAMAP" id="MF_00220_A">
    <property type="entry name" value="PyrC_classI_A"/>
    <property type="match status" value="1"/>
</dbReference>
<dbReference type="InterPro" id="IPR006680">
    <property type="entry name" value="Amidohydro-rel"/>
</dbReference>
<dbReference type="InterPro" id="IPR004722">
    <property type="entry name" value="DHOase"/>
</dbReference>
<dbReference type="InterPro" id="IPR050138">
    <property type="entry name" value="DHOase/Allantoinase_Hydrolase"/>
</dbReference>
<dbReference type="InterPro" id="IPR002195">
    <property type="entry name" value="Dihydroorotase_CS"/>
</dbReference>
<dbReference type="InterPro" id="IPR011059">
    <property type="entry name" value="Metal-dep_hydrolase_composite"/>
</dbReference>
<dbReference type="InterPro" id="IPR032466">
    <property type="entry name" value="Metal_Hydrolase"/>
</dbReference>
<dbReference type="NCBIfam" id="NF003271">
    <property type="entry name" value="PRK04250.1"/>
    <property type="match status" value="1"/>
</dbReference>
<dbReference type="NCBIfam" id="TIGR00857">
    <property type="entry name" value="pyrC_multi"/>
    <property type="match status" value="1"/>
</dbReference>
<dbReference type="PANTHER" id="PTHR43668">
    <property type="entry name" value="ALLANTOINASE"/>
    <property type="match status" value="1"/>
</dbReference>
<dbReference type="PANTHER" id="PTHR43668:SF2">
    <property type="entry name" value="ALLANTOINASE"/>
    <property type="match status" value="1"/>
</dbReference>
<dbReference type="Pfam" id="PF01979">
    <property type="entry name" value="Amidohydro_1"/>
    <property type="match status" value="2"/>
</dbReference>
<dbReference type="SUPFAM" id="SSF51338">
    <property type="entry name" value="Composite domain of metallo-dependent hydrolases"/>
    <property type="match status" value="2"/>
</dbReference>
<dbReference type="SUPFAM" id="SSF51556">
    <property type="entry name" value="Metallo-dependent hydrolases"/>
    <property type="match status" value="1"/>
</dbReference>
<dbReference type="PROSITE" id="PS00482">
    <property type="entry name" value="DIHYDROOROTASE_1"/>
    <property type="match status" value="1"/>
</dbReference>
<dbReference type="PROSITE" id="PS00483">
    <property type="entry name" value="DIHYDROOROTASE_2"/>
    <property type="match status" value="1"/>
</dbReference>
<proteinExistence type="inferred from homology"/>